<sequence length="595" mass="66600">MGQCYGKVNQSKQNGEEEANTTTYVVSGDGNQIQPLTPVNYGRAKNTPARSSNPSPWPSPFPHGSASPLPSGVSPSPARTSTPRRFFRRPFPPPSPAKHIKASLIKRLGVKPKEGPIPEERGTEPEQSLDKSFGYGKNFGAKYELGKEVGRGHFGHTCSGRGKKGDIKDHPIAVKIISKAKMTTAIAIEDVRREVKLLKSLSGHKYLIKYYDACEDANNVYIVMELCDGGELLDRILARGGKYPEDDAKAIVVQILTVVSFCHLQGVVHRDLKPENFLFTSSREDSDLKLIDFGLSDFIRPDERLNDIVGSAYYVAPEVLHRSYSLEADIWSIGVITYILLCGSRPFWARTESGIFRTVLRTEPNYDDVPWPSCSSEGKDFVKRLLNKDYRKRMSAVQALTHPWLRDDSRVIPLDILIYKLVKAYLHATPLRRAALKALAKALTENELVYLRAQFMLLGPNKDGSVSLENFKTALMQNATDAMRESRVPEILHTMESLAYRKMYFEEFCAAAISIHQLEAVDAWEEIATAGFQHFETEGNRVITIEELARELNVGASAYGHLRDWVRSSDGKLSYLGFTKFLHGVTLRAAHARPR</sequence>
<dbReference type="EC" id="2.7.11.1"/>
<dbReference type="EMBL" id="AF435449">
    <property type="protein sequence ID" value="AAL30817.1"/>
    <property type="molecule type" value="mRNA"/>
</dbReference>
<dbReference type="EMBL" id="AC005819">
    <property type="protein sequence ID" value="AAC69927.1"/>
    <property type="molecule type" value="Genomic_DNA"/>
</dbReference>
<dbReference type="EMBL" id="CP002685">
    <property type="protein sequence ID" value="AEC10742.1"/>
    <property type="molecule type" value="Genomic_DNA"/>
</dbReference>
<dbReference type="EMBL" id="AF462819">
    <property type="protein sequence ID" value="AAL58909.1"/>
    <property type="molecule type" value="mRNA"/>
</dbReference>
<dbReference type="EMBL" id="AK221901">
    <property type="protein sequence ID" value="BAD94271.1"/>
    <property type="molecule type" value="mRNA"/>
</dbReference>
<dbReference type="PIR" id="B84906">
    <property type="entry name" value="B84906"/>
</dbReference>
<dbReference type="RefSeq" id="NP_182193.1">
    <molecule id="Q9ZUZ2-1"/>
    <property type="nucleotide sequence ID" value="NM_130235.5"/>
</dbReference>
<dbReference type="SMR" id="Q9ZUZ2"/>
<dbReference type="BioGRID" id="4617">
    <property type="interactions" value="4"/>
</dbReference>
<dbReference type="FunCoup" id="Q9ZUZ2">
    <property type="interactions" value="1287"/>
</dbReference>
<dbReference type="IntAct" id="Q9ZUZ2">
    <property type="interactions" value="1"/>
</dbReference>
<dbReference type="STRING" id="3702.Q9ZUZ2"/>
<dbReference type="iPTMnet" id="Q9ZUZ2"/>
<dbReference type="PaxDb" id="3702-AT2G46700.1"/>
<dbReference type="ProteomicsDB" id="222798">
    <molecule id="Q9ZUZ2-1"/>
</dbReference>
<dbReference type="EnsemblPlants" id="AT2G46700.1">
    <molecule id="Q9ZUZ2-1"/>
    <property type="protein sequence ID" value="AT2G46700.1"/>
    <property type="gene ID" value="AT2G46700"/>
</dbReference>
<dbReference type="GeneID" id="819282"/>
<dbReference type="Gramene" id="AT2G46700.1">
    <molecule id="Q9ZUZ2-1"/>
    <property type="protein sequence ID" value="AT2G46700.1"/>
    <property type="gene ID" value="AT2G46700"/>
</dbReference>
<dbReference type="KEGG" id="ath:AT2G46700"/>
<dbReference type="Araport" id="AT2G46700"/>
<dbReference type="TAIR" id="AT2G46700">
    <property type="gene designation" value="CRK3"/>
</dbReference>
<dbReference type="eggNOG" id="KOG0032">
    <property type="taxonomic scope" value="Eukaryota"/>
</dbReference>
<dbReference type="HOGENOM" id="CLU_000288_37_2_1"/>
<dbReference type="InParanoid" id="Q9ZUZ2"/>
<dbReference type="OMA" id="AKFIVVQ"/>
<dbReference type="OrthoDB" id="40902at2759"/>
<dbReference type="PhylomeDB" id="Q9ZUZ2"/>
<dbReference type="PRO" id="PR:Q9ZUZ2"/>
<dbReference type="Proteomes" id="UP000006548">
    <property type="component" value="Chromosome 2"/>
</dbReference>
<dbReference type="ExpressionAtlas" id="Q9ZUZ2">
    <property type="expression patterns" value="baseline and differential"/>
</dbReference>
<dbReference type="GO" id="GO:0005737">
    <property type="term" value="C:cytoplasm"/>
    <property type="evidence" value="ECO:0007669"/>
    <property type="project" value="UniProtKB-SubCell"/>
</dbReference>
<dbReference type="GO" id="GO:0016020">
    <property type="term" value="C:membrane"/>
    <property type="evidence" value="ECO:0007669"/>
    <property type="project" value="UniProtKB-SubCell"/>
</dbReference>
<dbReference type="GO" id="GO:0005524">
    <property type="term" value="F:ATP binding"/>
    <property type="evidence" value="ECO:0007669"/>
    <property type="project" value="UniProtKB-KW"/>
</dbReference>
<dbReference type="GO" id="GO:0005509">
    <property type="term" value="F:calcium ion binding"/>
    <property type="evidence" value="ECO:0007669"/>
    <property type="project" value="InterPro"/>
</dbReference>
<dbReference type="GO" id="GO:0005516">
    <property type="term" value="F:calmodulin binding"/>
    <property type="evidence" value="ECO:0000314"/>
    <property type="project" value="UniProtKB"/>
</dbReference>
<dbReference type="GO" id="GO:0106310">
    <property type="term" value="F:protein serine kinase activity"/>
    <property type="evidence" value="ECO:0007669"/>
    <property type="project" value="RHEA"/>
</dbReference>
<dbReference type="GO" id="GO:0004674">
    <property type="term" value="F:protein serine/threonine kinase activity"/>
    <property type="evidence" value="ECO:0000314"/>
    <property type="project" value="UniProtKB"/>
</dbReference>
<dbReference type="GO" id="GO:0071215">
    <property type="term" value="P:cellular response to abscisic acid stimulus"/>
    <property type="evidence" value="ECO:0000270"/>
    <property type="project" value="UniProtKB"/>
</dbReference>
<dbReference type="GO" id="GO:0010150">
    <property type="term" value="P:leaf senescence"/>
    <property type="evidence" value="ECO:0000270"/>
    <property type="project" value="UniProtKB"/>
</dbReference>
<dbReference type="GO" id="GO:0046777">
    <property type="term" value="P:protein autophosphorylation"/>
    <property type="evidence" value="ECO:0000314"/>
    <property type="project" value="UniProtKB"/>
</dbReference>
<dbReference type="CDD" id="cd05117">
    <property type="entry name" value="STKc_CAMK"/>
    <property type="match status" value="1"/>
</dbReference>
<dbReference type="FunFam" id="1.10.510.10:FF:001864">
    <property type="entry name" value="Calcium-dependent protein kinase SK5"/>
    <property type="match status" value="1"/>
</dbReference>
<dbReference type="FunFam" id="1.10.238.10:FF:000085">
    <property type="entry name" value="CDPK-related kinase 1"/>
    <property type="match status" value="1"/>
</dbReference>
<dbReference type="FunFam" id="3.30.200.20:FF:000101">
    <property type="entry name" value="CDPK-related kinase 1"/>
    <property type="match status" value="1"/>
</dbReference>
<dbReference type="FunFam" id="1.10.510.10:FF:001294">
    <property type="entry name" value="CDPK-related kinase 3"/>
    <property type="match status" value="1"/>
</dbReference>
<dbReference type="Gene3D" id="1.10.238.10">
    <property type="entry name" value="EF-hand"/>
    <property type="match status" value="2"/>
</dbReference>
<dbReference type="Gene3D" id="3.30.200.20">
    <property type="entry name" value="Phosphorylase Kinase, domain 1"/>
    <property type="match status" value="1"/>
</dbReference>
<dbReference type="Gene3D" id="1.10.510.10">
    <property type="entry name" value="Transferase(Phosphotransferase) domain 1"/>
    <property type="match status" value="1"/>
</dbReference>
<dbReference type="InterPro" id="IPR050205">
    <property type="entry name" value="CDPK_Ser/Thr_kinases"/>
</dbReference>
<dbReference type="InterPro" id="IPR011992">
    <property type="entry name" value="EF-hand-dom_pair"/>
</dbReference>
<dbReference type="InterPro" id="IPR002048">
    <property type="entry name" value="EF_hand_dom"/>
</dbReference>
<dbReference type="InterPro" id="IPR011009">
    <property type="entry name" value="Kinase-like_dom_sf"/>
</dbReference>
<dbReference type="InterPro" id="IPR000719">
    <property type="entry name" value="Prot_kinase_dom"/>
</dbReference>
<dbReference type="InterPro" id="IPR017441">
    <property type="entry name" value="Protein_kinase_ATP_BS"/>
</dbReference>
<dbReference type="InterPro" id="IPR008271">
    <property type="entry name" value="Ser/Thr_kinase_AS"/>
</dbReference>
<dbReference type="PANTHER" id="PTHR24349">
    <property type="entry name" value="SERINE/THREONINE-PROTEIN KINASE"/>
    <property type="match status" value="1"/>
</dbReference>
<dbReference type="Pfam" id="PF00069">
    <property type="entry name" value="Pkinase"/>
    <property type="match status" value="1"/>
</dbReference>
<dbReference type="SMART" id="SM00220">
    <property type="entry name" value="S_TKc"/>
    <property type="match status" value="1"/>
</dbReference>
<dbReference type="SUPFAM" id="SSF47473">
    <property type="entry name" value="EF-hand"/>
    <property type="match status" value="1"/>
</dbReference>
<dbReference type="SUPFAM" id="SSF56112">
    <property type="entry name" value="Protein kinase-like (PK-like)"/>
    <property type="match status" value="1"/>
</dbReference>
<dbReference type="PROSITE" id="PS50222">
    <property type="entry name" value="EF_HAND_2"/>
    <property type="match status" value="2"/>
</dbReference>
<dbReference type="PROSITE" id="PS00107">
    <property type="entry name" value="PROTEIN_KINASE_ATP"/>
    <property type="match status" value="1"/>
</dbReference>
<dbReference type="PROSITE" id="PS50011">
    <property type="entry name" value="PROTEIN_KINASE_DOM"/>
    <property type="match status" value="1"/>
</dbReference>
<dbReference type="PROSITE" id="PS00108">
    <property type="entry name" value="PROTEIN_KINASE_ST"/>
    <property type="match status" value="1"/>
</dbReference>
<comment type="function">
    <text evidence="1 8 11">May play a role in signal transduction pathways that involve calcium as a second messenger (By similarity). Serine/threonine kinase that phosphorylates histone H3 an GLN1-1.</text>
</comment>
<comment type="catalytic activity">
    <reaction evidence="11">
        <text>L-seryl-[protein] + ATP = O-phospho-L-seryl-[protein] + ADP + H(+)</text>
        <dbReference type="Rhea" id="RHEA:17989"/>
        <dbReference type="Rhea" id="RHEA-COMP:9863"/>
        <dbReference type="Rhea" id="RHEA-COMP:11604"/>
        <dbReference type="ChEBI" id="CHEBI:15378"/>
        <dbReference type="ChEBI" id="CHEBI:29999"/>
        <dbReference type="ChEBI" id="CHEBI:30616"/>
        <dbReference type="ChEBI" id="CHEBI:83421"/>
        <dbReference type="ChEBI" id="CHEBI:456216"/>
        <dbReference type="EC" id="2.7.11.1"/>
    </reaction>
</comment>
<comment type="catalytic activity">
    <reaction evidence="11">
        <text>L-threonyl-[protein] + ATP = O-phospho-L-threonyl-[protein] + ADP + H(+)</text>
        <dbReference type="Rhea" id="RHEA:46608"/>
        <dbReference type="Rhea" id="RHEA-COMP:11060"/>
        <dbReference type="Rhea" id="RHEA-COMP:11605"/>
        <dbReference type="ChEBI" id="CHEBI:15378"/>
        <dbReference type="ChEBI" id="CHEBI:30013"/>
        <dbReference type="ChEBI" id="CHEBI:30616"/>
        <dbReference type="ChEBI" id="CHEBI:61977"/>
        <dbReference type="ChEBI" id="CHEBI:456216"/>
        <dbReference type="EC" id="2.7.11.1"/>
    </reaction>
</comment>
<comment type="activity regulation">
    <text evidence="11">Not activated by calcium. Autophosphorylation may play an important role in the regulation of the kinase activity. Stimulated by magnesium ions (optimum at 10-15 mM) and manganese ions.</text>
</comment>
<comment type="biophysicochemical properties">
    <kinetics>
        <KM evidence="8 11">20.4 uM for GLN1-1 (at pH 7.5 and 30 degrees Celsius)</KM>
        <KM evidence="8 11">6.2 uM for histone H3 (at pH 7.5 and 30 degrees Celsius)</KM>
        <Vmax evidence="8 11">35.5 nmol/min/mg enzyme with histone H3 as substrate (at pH 7.5 and 30 degrees Celsius)</Vmax>
    </kinetics>
    <phDependence>
        <text evidence="8 11">Optimum pH is 8.</text>
    </phDependence>
</comment>
<comment type="subunit">
    <text evidence="8 9">Binds calmodulin (CaM) in a calcium-dependent manner. Interacts with GLN1-1.</text>
</comment>
<comment type="interaction">
    <interactant intactId="EBI-1538748">
        <id>Q9ZUZ2</id>
    </interactant>
    <interactant intactId="EBI-1538766">
        <id>Q56WN1</id>
        <label>GLN1-1</label>
    </interactant>
    <organismsDiffer>false</organismsDiffer>
    <experiments>7</experiments>
</comment>
<comment type="subcellular location">
    <subcellularLocation>
        <location evidence="8">Cytoplasm</location>
    </subcellularLocation>
    <subcellularLocation>
        <location evidence="1">Membrane</location>
        <topology evidence="1">Lipid-anchor</topology>
        <orientation evidence="1">Cytoplasmic side</orientation>
    </subcellularLocation>
</comment>
<comment type="alternative products">
    <event type="alternative splicing"/>
    <isoform>
        <id>Q9ZUZ2-1</id>
        <name>1</name>
        <sequence type="displayed"/>
    </isoform>
    <isoform>
        <id>Q9ZUZ2-2</id>
        <name>2</name>
        <sequence type="described" ref="VSP_044529 VSP_044530"/>
    </isoform>
</comment>
<comment type="tissue specificity">
    <text evidence="8 11">Ubiquitously expressed with higher levels in siliques and roots, especially at the root cap. Particularly present in vascular bundles of stems and leaves.</text>
</comment>
<comment type="developmental stage">
    <text evidence="11">During flower development, abundantly present in the apical meristem. During pollen development, there are high levels in pollen mother cells and it accumulates gradually to reach a peak during the tetrad stage. Fades out in mature pollen. Also present in tapetal cells and at stigmatic surface of the stigma.</text>
</comment>
<comment type="induction">
    <text evidence="8 11">By abscisic acid (ABA) and during leaf senescence.</text>
</comment>
<comment type="domain">
    <text evidence="1">There are 3 contiguous domains conserved in the CDPK subfamily: a kinase domain, an autoinhibitory (junction) domain and a calmodulin-like domain. The autoinhibitory domain (409-439) inactivates kinase activity under calcium-free conditions (By similarity).</text>
</comment>
<comment type="PTM">
    <text evidence="10">Autophosphorylated.</text>
</comment>
<comment type="similarity">
    <text evidence="4">Belongs to the protein kinase superfamily. Ser/Thr protein kinase family. CDPK subfamily.</text>
</comment>
<reference key="1">
    <citation type="journal article" date="2005" name="Plant Sci.">
        <title>Biochemical and expression analysis of an Arabidopsis calcium-dependent protein kinase-related kinase.</title>
        <authorList>
            <person name="Du W."/>
            <person name="Wang Y."/>
            <person name="Liang S."/>
            <person name="Lu Y.-T."/>
        </authorList>
        <dbReference type="AGRICOLA" id="IND43694487"/>
    </citation>
    <scope>NUCLEOTIDE SEQUENCE [MRNA] (ISOFORM 1)</scope>
    <scope>FUNCTION</scope>
    <scope>CATALYTIC ACTIVITY</scope>
    <scope>AUTOPHOSPHORYLATION</scope>
    <scope>BIOPHYSICOCHEMICAL PROPERTIES</scope>
    <scope>TISSUE SPECIFICITY</scope>
    <scope>DEVELOPMENTAL STAGE</scope>
    <scope>INDUCTION BY ABSCISIC ACID</scope>
    <scope>ACTIVITY REGULATION</scope>
    <scope>GENE FAMILY</scope>
    <source>
        <strain>cv. Columbia</strain>
    </source>
</reference>
<reference key="2">
    <citation type="journal article" date="1999" name="Nature">
        <title>Sequence and analysis of chromosome 2 of the plant Arabidopsis thaliana.</title>
        <authorList>
            <person name="Lin X."/>
            <person name="Kaul S."/>
            <person name="Rounsley S.D."/>
            <person name="Shea T.P."/>
            <person name="Benito M.-I."/>
            <person name="Town C.D."/>
            <person name="Fujii C.Y."/>
            <person name="Mason T.M."/>
            <person name="Bowman C.L."/>
            <person name="Barnstead M.E."/>
            <person name="Feldblyum T.V."/>
            <person name="Buell C.R."/>
            <person name="Ketchum K.A."/>
            <person name="Lee J.J."/>
            <person name="Ronning C.M."/>
            <person name="Koo H.L."/>
            <person name="Moffat K.S."/>
            <person name="Cronin L.A."/>
            <person name="Shen M."/>
            <person name="Pai G."/>
            <person name="Van Aken S."/>
            <person name="Umayam L."/>
            <person name="Tallon L.J."/>
            <person name="Gill J.E."/>
            <person name="Adams M.D."/>
            <person name="Carrera A.J."/>
            <person name="Creasy T.H."/>
            <person name="Goodman H.M."/>
            <person name="Somerville C.R."/>
            <person name="Copenhaver G.P."/>
            <person name="Preuss D."/>
            <person name="Nierman W.C."/>
            <person name="White O."/>
            <person name="Eisen J.A."/>
            <person name="Salzberg S.L."/>
            <person name="Fraser C.M."/>
            <person name="Venter J.C."/>
        </authorList>
    </citation>
    <scope>NUCLEOTIDE SEQUENCE [LARGE SCALE GENOMIC DNA]</scope>
    <source>
        <strain>cv. Columbia</strain>
    </source>
</reference>
<reference key="3">
    <citation type="journal article" date="2017" name="Plant J.">
        <title>Araport11: a complete reannotation of the Arabidopsis thaliana reference genome.</title>
        <authorList>
            <person name="Cheng C.Y."/>
            <person name="Krishnakumar V."/>
            <person name="Chan A.P."/>
            <person name="Thibaud-Nissen F."/>
            <person name="Schobel S."/>
            <person name="Town C.D."/>
        </authorList>
    </citation>
    <scope>GENOME REANNOTATION</scope>
    <source>
        <strain>cv. Columbia</strain>
    </source>
</reference>
<reference key="4">
    <citation type="journal article" date="2003" name="Science">
        <title>Empirical analysis of transcriptional activity in the Arabidopsis genome.</title>
        <authorList>
            <person name="Yamada K."/>
            <person name="Lim J."/>
            <person name="Dale J.M."/>
            <person name="Chen H."/>
            <person name="Shinn P."/>
            <person name="Palm C.J."/>
            <person name="Southwick A.M."/>
            <person name="Wu H.C."/>
            <person name="Kim C.J."/>
            <person name="Nguyen M."/>
            <person name="Pham P.K."/>
            <person name="Cheuk R.F."/>
            <person name="Karlin-Newmann G."/>
            <person name="Liu S.X."/>
            <person name="Lam B."/>
            <person name="Sakano H."/>
            <person name="Wu T."/>
            <person name="Yu G."/>
            <person name="Miranda M."/>
            <person name="Quach H.L."/>
            <person name="Tripp M."/>
            <person name="Chang C.H."/>
            <person name="Lee J.M."/>
            <person name="Toriumi M.J."/>
            <person name="Chan M.M."/>
            <person name="Tang C.C."/>
            <person name="Onodera C.S."/>
            <person name="Deng J.M."/>
            <person name="Akiyama K."/>
            <person name="Ansari Y."/>
            <person name="Arakawa T."/>
            <person name="Banh J."/>
            <person name="Banno F."/>
            <person name="Bowser L."/>
            <person name="Brooks S.Y."/>
            <person name="Carninci P."/>
            <person name="Chao Q."/>
            <person name="Choy N."/>
            <person name="Enju A."/>
            <person name="Goldsmith A.D."/>
            <person name="Gurjal M."/>
            <person name="Hansen N.F."/>
            <person name="Hayashizaki Y."/>
            <person name="Johnson-Hopson C."/>
            <person name="Hsuan V.W."/>
            <person name="Iida K."/>
            <person name="Karnes M."/>
            <person name="Khan S."/>
            <person name="Koesema E."/>
            <person name="Ishida J."/>
            <person name="Jiang P.X."/>
            <person name="Jones T."/>
            <person name="Kawai J."/>
            <person name="Kamiya A."/>
            <person name="Meyers C."/>
            <person name="Nakajima M."/>
            <person name="Narusaka M."/>
            <person name="Seki M."/>
            <person name="Sakurai T."/>
            <person name="Satou M."/>
            <person name="Tamse R."/>
            <person name="Vaysberg M."/>
            <person name="Wallender E.K."/>
            <person name="Wong C."/>
            <person name="Yamamura Y."/>
            <person name="Yuan S."/>
            <person name="Shinozaki K."/>
            <person name="Davis R.W."/>
            <person name="Theologis A."/>
            <person name="Ecker J.R."/>
        </authorList>
    </citation>
    <scope>NUCLEOTIDE SEQUENCE [LARGE SCALE MRNA] (ISOFORM 1)</scope>
    <source>
        <strain>cv. Columbia</strain>
    </source>
</reference>
<reference key="5">
    <citation type="submission" date="2005-03" db="EMBL/GenBank/DDBJ databases">
        <title>Large-scale analysis of RIKEN Arabidopsis full-length (RAFL) cDNAs.</title>
        <authorList>
            <person name="Totoki Y."/>
            <person name="Seki M."/>
            <person name="Ishida J."/>
            <person name="Nakajima M."/>
            <person name="Enju A."/>
            <person name="Kamiya A."/>
            <person name="Narusaka M."/>
            <person name="Shin-i T."/>
            <person name="Nakagawa M."/>
            <person name="Sakamoto N."/>
            <person name="Oishi K."/>
            <person name="Kohara Y."/>
            <person name="Kobayashi M."/>
            <person name="Toyoda A."/>
            <person name="Sakaki Y."/>
            <person name="Sakurai T."/>
            <person name="Iida K."/>
            <person name="Akiyama K."/>
            <person name="Satou M."/>
            <person name="Toyoda T."/>
            <person name="Konagaya A."/>
            <person name="Carninci P."/>
            <person name="Kawai J."/>
            <person name="Hayashizaki Y."/>
            <person name="Shinozaki K."/>
        </authorList>
    </citation>
    <scope>NUCLEOTIDE SEQUENCE [LARGE SCALE MRNA] (ISOFORM 2)</scope>
    <source>
        <strain>cv. Columbia</strain>
    </source>
</reference>
<reference key="6">
    <citation type="journal article" date="2003" name="Gravit. Space Biol. Bull.">
        <title>Calcium-regulated protein kinases of plants.</title>
        <authorList>
            <person name="Harmon A.C."/>
        </authorList>
    </citation>
    <scope>REVIEW</scope>
    <scope>GENE FAMILY</scope>
</reference>
<reference key="7">
    <citation type="journal article" date="2003" name="Plant Physiol.">
        <title>The Arabidopsis CDPK-SnRK superfamily of protein kinases.</title>
        <authorList>
            <person name="Hrabak E.M."/>
            <person name="Chan C.W.M."/>
            <person name="Gribskov M."/>
            <person name="Harper J.F."/>
            <person name="Choi J.H."/>
            <person name="Halford N."/>
            <person name="Kudla J."/>
            <person name="Luan S."/>
            <person name="Nimmo H.G."/>
            <person name="Sussman M.R."/>
            <person name="Thomas M."/>
            <person name="Walker-Simmons K."/>
            <person name="Zhu J.-K."/>
            <person name="Harmon A.C."/>
        </authorList>
    </citation>
    <scope>GENE FAMILY</scope>
    <scope>NOMENCLATURE</scope>
    <source>
        <strain>cv. Columbia</strain>
    </source>
</reference>
<reference key="8">
    <citation type="journal article" date="2006" name="Biochem. Biophys. Res. Commun.">
        <title>Arabidopsis cytosolic glutamine synthetase AtGLN1;1 is a potential substrate of AtCRK3 involved in leaf senescence.</title>
        <authorList>
            <person name="Li R.-J."/>
            <person name="Hua W."/>
            <person name="Lu Y.-T."/>
        </authorList>
    </citation>
    <scope>FUNCTION</scope>
    <scope>INTERACTION WITH GLN1-1</scope>
    <scope>INDUCTION BY LEAF SENESCENCE</scope>
    <scope>TISSUE SPECIFICITY</scope>
    <scope>SUBCELLULAR LOCATION</scope>
    <scope>BIOPHYSICOCHEMICAL PROPERTIES</scope>
    <source>
        <strain>cv. Columbia</strain>
    </source>
</reference>
<reference key="9">
    <citation type="journal article" date="2007" name="Mol. Cells">
        <title>Isolation and characterization of a novel calcium/calmodulin-dependent protein kinase, AtCK, from arabidopsis.</title>
        <authorList>
            <person name="Jeong J.C."/>
            <person name="Shin D."/>
            <person name="Lee J."/>
            <person name="Kang C.H."/>
            <person name="Baek D."/>
            <person name="Cho M.J."/>
            <person name="Kim M.C."/>
            <person name="Yun D.-J."/>
        </authorList>
    </citation>
    <scope>INTERACTION WITH CALMODULIN</scope>
    <scope>AUTOPHOSPHORYLATION</scope>
</reference>
<reference key="10">
    <citation type="journal article" date="2011" name="Front. Plant Sci.">
        <title>Calcium-dependent protein kinases from Arabidopsis show substrate specificity differences in an analysis of 103 substrates.</title>
        <authorList>
            <person name="Curran A."/>
            <person name="Chang I.-F."/>
            <person name="Chang C.-L."/>
            <person name="Garg S."/>
            <person name="Miguel R.M."/>
            <person name="Barron Y.D."/>
            <person name="Li Y."/>
            <person name="Romanowsky S."/>
            <person name="Cushman J.C."/>
            <person name="Gribskov M."/>
            <person name="Harmon A.C."/>
            <person name="Harper J.F."/>
        </authorList>
    </citation>
    <scope>PHOSPHORYLATION AT SER-353</scope>
</reference>
<proteinExistence type="evidence at protein level"/>
<name>CAMK3_ARATH</name>
<accession>Q9ZUZ2</accession>
<accession>Q56WX8</accession>
<accession>Q8W107</accession>
<accession>Q8W562</accession>
<gene>
    <name type="primary">CRK3</name>
    <name type="synonym">CaMK4</name>
    <name type="synonym">CK</name>
    <name type="ordered locus">At2g46700</name>
    <name type="ORF">T3A4.8</name>
</gene>
<evidence type="ECO:0000250" key="1"/>
<evidence type="ECO:0000250" key="2">
    <source>
        <dbReference type="UniProtKB" id="Q9FKW4"/>
    </source>
</evidence>
<evidence type="ECO:0000250" key="3">
    <source>
        <dbReference type="UniProtKB" id="Q9SG12"/>
    </source>
</evidence>
<evidence type="ECO:0000255" key="4">
    <source>
        <dbReference type="PROSITE-ProRule" id="PRU00159"/>
    </source>
</evidence>
<evidence type="ECO:0000255" key="5">
    <source>
        <dbReference type="PROSITE-ProRule" id="PRU00448"/>
    </source>
</evidence>
<evidence type="ECO:0000255" key="6">
    <source>
        <dbReference type="PROSITE-ProRule" id="PRU10027"/>
    </source>
</evidence>
<evidence type="ECO:0000256" key="7">
    <source>
        <dbReference type="SAM" id="MobiDB-lite"/>
    </source>
</evidence>
<evidence type="ECO:0000269" key="8">
    <source>
    </source>
</evidence>
<evidence type="ECO:0000269" key="9">
    <source>
    </source>
</evidence>
<evidence type="ECO:0000269" key="10">
    <source>
    </source>
</evidence>
<evidence type="ECO:0000269" key="11">
    <source ref="1"/>
</evidence>
<evidence type="ECO:0000303" key="12">
    <source ref="5"/>
</evidence>
<evidence type="ECO:0000305" key="13"/>
<feature type="initiator methionine" description="Removed" evidence="3">
    <location>
        <position position="1"/>
    </location>
</feature>
<feature type="chain" id="PRO_0000420530" description="CDPK-related kinase 3">
    <location>
        <begin position="2"/>
        <end position="595"/>
    </location>
</feature>
<feature type="domain" description="Protein kinase" evidence="4">
    <location>
        <begin position="143"/>
        <end position="405"/>
    </location>
</feature>
<feature type="domain" description="EF-hand 1" evidence="5">
    <location>
        <begin position="446"/>
        <end position="482"/>
    </location>
</feature>
<feature type="domain" description="EF-hand 2" evidence="13">
    <location>
        <begin position="483"/>
        <end position="518"/>
    </location>
</feature>
<feature type="domain" description="EF-hand 3" evidence="5">
    <location>
        <begin position="519"/>
        <end position="558"/>
    </location>
</feature>
<feature type="domain" description="EF-hand 4" evidence="13">
    <location>
        <begin position="559"/>
        <end position="588"/>
    </location>
</feature>
<feature type="region of interest" description="Disordered" evidence="7">
    <location>
        <begin position="1"/>
        <end position="131"/>
    </location>
</feature>
<feature type="region of interest" description="Autoinhibitory domain" evidence="1">
    <location>
        <begin position="409"/>
        <end position="439"/>
    </location>
</feature>
<feature type="region of interest" description="Calmodulin binding (CaMBD)">
    <location>
        <begin position="428"/>
        <end position="448"/>
    </location>
</feature>
<feature type="compositionally biased region" description="Polar residues" evidence="7">
    <location>
        <begin position="20"/>
        <end position="37"/>
    </location>
</feature>
<feature type="compositionally biased region" description="Basic and acidic residues" evidence="7">
    <location>
        <begin position="111"/>
        <end position="124"/>
    </location>
</feature>
<feature type="active site" description="Proton acceptor" evidence="4 6">
    <location>
        <position position="271"/>
    </location>
</feature>
<feature type="binding site" evidence="4">
    <location>
        <begin position="149"/>
        <end position="157"/>
    </location>
    <ligand>
        <name>ATP</name>
        <dbReference type="ChEBI" id="CHEBI:30616"/>
    </ligand>
</feature>
<feature type="binding site" evidence="4">
    <location>
        <position position="175"/>
    </location>
    <ligand>
        <name>ATP</name>
        <dbReference type="ChEBI" id="CHEBI:30616"/>
    </ligand>
</feature>
<feature type="binding site" evidence="13">
    <location>
        <position position="461"/>
    </location>
    <ligand>
        <name>Ca(2+)</name>
        <dbReference type="ChEBI" id="CHEBI:29108"/>
        <label>1</label>
    </ligand>
</feature>
<feature type="binding site" evidence="13">
    <location>
        <position position="463"/>
    </location>
    <ligand>
        <name>Ca(2+)</name>
        <dbReference type="ChEBI" id="CHEBI:29108"/>
        <label>1</label>
    </ligand>
</feature>
<feature type="binding site" evidence="13">
    <location>
        <position position="465"/>
    </location>
    <ligand>
        <name>Ca(2+)</name>
        <dbReference type="ChEBI" id="CHEBI:29108"/>
        <label>1</label>
    </ligand>
</feature>
<feature type="binding site" evidence="13">
    <location>
        <position position="502"/>
    </location>
    <ligand>
        <name>Ca(2+)</name>
        <dbReference type="ChEBI" id="CHEBI:29108"/>
        <label>2</label>
    </ligand>
</feature>
<feature type="binding site" evidence="13">
    <location>
        <position position="507"/>
    </location>
    <ligand>
        <name>Ca(2+)</name>
        <dbReference type="ChEBI" id="CHEBI:29108"/>
        <label>2</label>
    </ligand>
</feature>
<feature type="binding site" evidence="13">
    <location>
        <position position="540"/>
    </location>
    <ligand>
        <name>Ca(2+)</name>
        <dbReference type="ChEBI" id="CHEBI:29108"/>
        <label>3</label>
    </ligand>
</feature>
<feature type="binding site" evidence="13">
    <location>
        <position position="547"/>
    </location>
    <ligand>
        <name>Ca(2+)</name>
        <dbReference type="ChEBI" id="CHEBI:29108"/>
        <label>3</label>
    </ligand>
</feature>
<feature type="binding site" evidence="13">
    <location>
        <position position="568"/>
    </location>
    <ligand>
        <name>Ca(2+)</name>
        <dbReference type="ChEBI" id="CHEBI:29108"/>
        <label>4</label>
    </ligand>
</feature>
<feature type="binding site" evidence="13">
    <location>
        <position position="570"/>
    </location>
    <ligand>
        <name>Ca(2+)</name>
        <dbReference type="ChEBI" id="CHEBI:29108"/>
        <label>4</label>
    </ligand>
</feature>
<feature type="binding site" evidence="13">
    <location>
        <position position="572"/>
    </location>
    <ligand>
        <name>Ca(2+)</name>
        <dbReference type="ChEBI" id="CHEBI:29108"/>
        <label>4</label>
    </ligand>
</feature>
<feature type="modified residue" description="Phosphoserine" evidence="2">
    <location>
        <position position="311"/>
    </location>
</feature>
<feature type="modified residue" description="Phosphoserine; by CPK1 and CPK34" evidence="10">
    <location>
        <position position="353"/>
    </location>
</feature>
<feature type="modified residue" description="Phosphoserine" evidence="2">
    <location>
        <position position="574"/>
    </location>
</feature>
<feature type="lipid moiety-binding region" description="N-myristoyl glycine" evidence="1">
    <location>
        <position position="2"/>
    </location>
</feature>
<feature type="splice variant" id="VSP_044529" description="In isoform 2." evidence="12">
    <location>
        <begin position="1"/>
        <end position="224"/>
    </location>
</feature>
<feature type="splice variant" id="VSP_044530" description="In isoform 2." evidence="12">
    <original>E</original>
    <variation>M</variation>
    <location>
        <position position="225"/>
    </location>
</feature>
<feature type="sequence conflict" description="In Ref. 4; AAL58909." evidence="13" ref="4">
    <original>T</original>
    <variation>A</variation>
    <location>
        <position position="22"/>
    </location>
</feature>
<feature type="sequence conflict" description="In Ref. 1; AAL30817." evidence="13" ref="1">
    <original>R</original>
    <variation>A</variation>
    <location>
        <position position="283"/>
    </location>
</feature>
<feature type="sequence conflict" description="In Ref. 1; AAL30817." evidence="13" ref="1">
    <original>A</original>
    <variation>K</variation>
    <location>
        <position position="440"/>
    </location>
</feature>
<feature type="sequence conflict" description="In Ref. 1; AAL30817." evidence="13" ref="1">
    <original>MQ</original>
    <variation>IE</variation>
    <location>
        <begin position="476"/>
        <end position="477"/>
    </location>
</feature>
<protein>
    <recommendedName>
        <fullName>CDPK-related kinase 3</fullName>
        <shortName>AtCRK3</shortName>
        <ecNumber>2.7.11.1</ecNumber>
    </recommendedName>
    <alternativeName>
        <fullName>Calcium/calmodulin-dependent protein kinase 4</fullName>
        <shortName>AtCK</shortName>
    </alternativeName>
</protein>
<organism>
    <name type="scientific">Arabidopsis thaliana</name>
    <name type="common">Mouse-ear cress</name>
    <dbReference type="NCBI Taxonomy" id="3702"/>
    <lineage>
        <taxon>Eukaryota</taxon>
        <taxon>Viridiplantae</taxon>
        <taxon>Streptophyta</taxon>
        <taxon>Embryophyta</taxon>
        <taxon>Tracheophyta</taxon>
        <taxon>Spermatophyta</taxon>
        <taxon>Magnoliopsida</taxon>
        <taxon>eudicotyledons</taxon>
        <taxon>Gunneridae</taxon>
        <taxon>Pentapetalae</taxon>
        <taxon>rosids</taxon>
        <taxon>malvids</taxon>
        <taxon>Brassicales</taxon>
        <taxon>Brassicaceae</taxon>
        <taxon>Camelineae</taxon>
        <taxon>Arabidopsis</taxon>
    </lineage>
</organism>
<keyword id="KW-0025">Alternative splicing</keyword>
<keyword id="KW-0067">ATP-binding</keyword>
<keyword id="KW-0106">Calcium</keyword>
<keyword id="KW-0963">Cytoplasm</keyword>
<keyword id="KW-0418">Kinase</keyword>
<keyword id="KW-0449">Lipoprotein</keyword>
<keyword id="KW-0460">Magnesium</keyword>
<keyword id="KW-0464">Manganese</keyword>
<keyword id="KW-0472">Membrane</keyword>
<keyword id="KW-0479">Metal-binding</keyword>
<keyword id="KW-0519">Myristate</keyword>
<keyword id="KW-0547">Nucleotide-binding</keyword>
<keyword id="KW-0597">Phosphoprotein</keyword>
<keyword id="KW-1185">Reference proteome</keyword>
<keyword id="KW-0677">Repeat</keyword>
<keyword id="KW-0723">Serine/threonine-protein kinase</keyword>
<keyword id="KW-0808">Transferase</keyword>